<name>ILVN_ECO57</name>
<protein>
    <recommendedName>
        <fullName>Acetolactate synthase isozyme 1 small subunit</fullName>
        <ecNumber>2.2.1.6</ecNumber>
    </recommendedName>
    <alternativeName>
        <fullName>Acetohydroxy-acid synthase I small subunit</fullName>
        <shortName>AHAS-I</shortName>
        <shortName>ALS-I</shortName>
    </alternativeName>
</protein>
<gene>
    <name type="primary">ilvN</name>
    <name type="ordered locus">Z5164</name>
    <name type="ordered locus">ECs4611</name>
</gene>
<keyword id="KW-0028">Amino-acid biosynthesis</keyword>
<keyword id="KW-0100">Branched-chain amino acid biosynthesis</keyword>
<keyword id="KW-1185">Reference proteome</keyword>
<keyword id="KW-0808">Transferase</keyword>
<comment type="catalytic activity">
    <reaction>
        <text>2 pyruvate + H(+) = (2S)-2-acetolactate + CO2</text>
        <dbReference type="Rhea" id="RHEA:25249"/>
        <dbReference type="ChEBI" id="CHEBI:15361"/>
        <dbReference type="ChEBI" id="CHEBI:15378"/>
        <dbReference type="ChEBI" id="CHEBI:16526"/>
        <dbReference type="ChEBI" id="CHEBI:58476"/>
        <dbReference type="EC" id="2.2.1.6"/>
    </reaction>
</comment>
<comment type="pathway">
    <text>Amino-acid biosynthesis; L-isoleucine biosynthesis; L-isoleucine from 2-oxobutanoate: step 1/4.</text>
</comment>
<comment type="pathway">
    <text>Amino-acid biosynthesis; L-valine biosynthesis; L-valine from pyruvate: step 1/4.</text>
</comment>
<comment type="subunit">
    <text evidence="1">Dimer of large and small chains.</text>
</comment>
<comment type="similarity">
    <text evidence="3">Belongs to the acetolactate synthase small subunit family.</text>
</comment>
<evidence type="ECO:0000250" key="1"/>
<evidence type="ECO:0000255" key="2">
    <source>
        <dbReference type="PROSITE-ProRule" id="PRU01007"/>
    </source>
</evidence>
<evidence type="ECO:0000305" key="3"/>
<feature type="chain" id="PRO_0000151420" description="Acetolactate synthase isozyme 1 small subunit">
    <location>
        <begin position="1"/>
        <end position="96"/>
    </location>
</feature>
<feature type="domain" description="ACT" evidence="2">
    <location>
        <begin position="10"/>
        <end position="83"/>
    </location>
</feature>
<accession>P0ADG0</accession>
<accession>P08143</accession>
<proteinExistence type="inferred from homology"/>
<dbReference type="EC" id="2.2.1.6"/>
<dbReference type="EMBL" id="AE005174">
    <property type="protein sequence ID" value="AAG58873.1"/>
    <property type="molecule type" value="Genomic_DNA"/>
</dbReference>
<dbReference type="EMBL" id="BA000007">
    <property type="protein sequence ID" value="BAB38034.1"/>
    <property type="molecule type" value="Genomic_DNA"/>
</dbReference>
<dbReference type="PIR" id="C91205">
    <property type="entry name" value="C91205"/>
</dbReference>
<dbReference type="PIR" id="E86051">
    <property type="entry name" value="E86051"/>
</dbReference>
<dbReference type="RefSeq" id="NP_312638.1">
    <property type="nucleotide sequence ID" value="NC_002695.1"/>
</dbReference>
<dbReference type="RefSeq" id="WP_001181706.1">
    <property type="nucleotide sequence ID" value="NZ_VOAI01000011.1"/>
</dbReference>
<dbReference type="BMRB" id="P0ADG0"/>
<dbReference type="SMR" id="P0ADG0"/>
<dbReference type="STRING" id="155864.Z5164"/>
<dbReference type="GeneID" id="915423"/>
<dbReference type="GeneID" id="93778411"/>
<dbReference type="KEGG" id="ece:Z5164"/>
<dbReference type="KEGG" id="ecs:ECs_4611"/>
<dbReference type="PATRIC" id="fig|386585.9.peg.4818"/>
<dbReference type="eggNOG" id="COG0440">
    <property type="taxonomic scope" value="Bacteria"/>
</dbReference>
<dbReference type="HOGENOM" id="CLU_165363_0_0_6"/>
<dbReference type="OMA" id="NEQSRIW"/>
<dbReference type="UniPathway" id="UPA00047">
    <property type="reaction ID" value="UER00055"/>
</dbReference>
<dbReference type="UniPathway" id="UPA00049">
    <property type="reaction ID" value="UER00059"/>
</dbReference>
<dbReference type="Proteomes" id="UP000000558">
    <property type="component" value="Chromosome"/>
</dbReference>
<dbReference type="Proteomes" id="UP000002519">
    <property type="component" value="Chromosome"/>
</dbReference>
<dbReference type="GO" id="GO:0005829">
    <property type="term" value="C:cytosol"/>
    <property type="evidence" value="ECO:0007669"/>
    <property type="project" value="TreeGrafter"/>
</dbReference>
<dbReference type="GO" id="GO:0003984">
    <property type="term" value="F:acetolactate synthase activity"/>
    <property type="evidence" value="ECO:0007669"/>
    <property type="project" value="UniProtKB-EC"/>
</dbReference>
<dbReference type="GO" id="GO:1990610">
    <property type="term" value="F:acetolactate synthase regulator activity"/>
    <property type="evidence" value="ECO:0007669"/>
    <property type="project" value="InterPro"/>
</dbReference>
<dbReference type="GO" id="GO:0009097">
    <property type="term" value="P:isoleucine biosynthetic process"/>
    <property type="evidence" value="ECO:0007669"/>
    <property type="project" value="UniProtKB-UniPathway"/>
</dbReference>
<dbReference type="GO" id="GO:0009099">
    <property type="term" value="P:L-valine biosynthetic process"/>
    <property type="evidence" value="ECO:0007669"/>
    <property type="project" value="UniProtKB-UniPathway"/>
</dbReference>
<dbReference type="CDD" id="cd04878">
    <property type="entry name" value="ACT_AHAS"/>
    <property type="match status" value="1"/>
</dbReference>
<dbReference type="FunFam" id="3.30.70.260:FF:000011">
    <property type="entry name" value="Acetolactate synthase isozyme 1 small subunit"/>
    <property type="match status" value="1"/>
</dbReference>
<dbReference type="Gene3D" id="3.30.70.260">
    <property type="match status" value="1"/>
</dbReference>
<dbReference type="InterPro" id="IPR004789">
    <property type="entry name" value="Acetalactate_synth_ssu"/>
</dbReference>
<dbReference type="InterPro" id="IPR045865">
    <property type="entry name" value="ACT-like_dom_sf"/>
</dbReference>
<dbReference type="InterPro" id="IPR002912">
    <property type="entry name" value="ACT_dom"/>
</dbReference>
<dbReference type="InterPro" id="IPR039557">
    <property type="entry name" value="AHAS_ACT"/>
</dbReference>
<dbReference type="InterPro" id="IPR054480">
    <property type="entry name" value="AHAS_small-like_ACT"/>
</dbReference>
<dbReference type="NCBIfam" id="NF006036">
    <property type="entry name" value="PRK08178.1"/>
    <property type="match status" value="1"/>
</dbReference>
<dbReference type="PANTHER" id="PTHR30239:SF4">
    <property type="entry name" value="ACETOLACTATE SYNTHASE ISOZYME 1 SMALL SUBUNIT"/>
    <property type="match status" value="1"/>
</dbReference>
<dbReference type="PANTHER" id="PTHR30239">
    <property type="entry name" value="ACETOLACTATE SYNTHASE SMALL SUBUNIT"/>
    <property type="match status" value="1"/>
</dbReference>
<dbReference type="Pfam" id="PF22629">
    <property type="entry name" value="ACT_AHAS_ss"/>
    <property type="match status" value="1"/>
</dbReference>
<dbReference type="SUPFAM" id="SSF55021">
    <property type="entry name" value="ACT-like"/>
    <property type="match status" value="1"/>
</dbReference>
<dbReference type="PROSITE" id="PS51671">
    <property type="entry name" value="ACT"/>
    <property type="match status" value="1"/>
</dbReference>
<sequence>MQNTTHDNVILELTVRNHPGVMTHVCGLFARRAFNVEGILCLPIQDSDKSHIWLLVNDDQRLEQMISQIDKLEDVVKVQRNQSDPTMFNKIAVFFQ</sequence>
<organism>
    <name type="scientific">Escherichia coli O157:H7</name>
    <dbReference type="NCBI Taxonomy" id="83334"/>
    <lineage>
        <taxon>Bacteria</taxon>
        <taxon>Pseudomonadati</taxon>
        <taxon>Pseudomonadota</taxon>
        <taxon>Gammaproteobacteria</taxon>
        <taxon>Enterobacterales</taxon>
        <taxon>Enterobacteriaceae</taxon>
        <taxon>Escherichia</taxon>
    </lineage>
</organism>
<reference key="1">
    <citation type="journal article" date="2001" name="Nature">
        <title>Genome sequence of enterohaemorrhagic Escherichia coli O157:H7.</title>
        <authorList>
            <person name="Perna N.T."/>
            <person name="Plunkett G. III"/>
            <person name="Burland V."/>
            <person name="Mau B."/>
            <person name="Glasner J.D."/>
            <person name="Rose D.J."/>
            <person name="Mayhew G.F."/>
            <person name="Evans P.S."/>
            <person name="Gregor J."/>
            <person name="Kirkpatrick H.A."/>
            <person name="Posfai G."/>
            <person name="Hackett J."/>
            <person name="Klink S."/>
            <person name="Boutin A."/>
            <person name="Shao Y."/>
            <person name="Miller L."/>
            <person name="Grotbeck E.J."/>
            <person name="Davis N.W."/>
            <person name="Lim A."/>
            <person name="Dimalanta E.T."/>
            <person name="Potamousis K."/>
            <person name="Apodaca J."/>
            <person name="Anantharaman T.S."/>
            <person name="Lin J."/>
            <person name="Yen G."/>
            <person name="Schwartz D.C."/>
            <person name="Welch R.A."/>
            <person name="Blattner F.R."/>
        </authorList>
    </citation>
    <scope>NUCLEOTIDE SEQUENCE [LARGE SCALE GENOMIC DNA]</scope>
    <source>
        <strain>O157:H7 / EDL933 / ATCC 700927 / EHEC</strain>
    </source>
</reference>
<reference key="2">
    <citation type="journal article" date="2001" name="DNA Res.">
        <title>Complete genome sequence of enterohemorrhagic Escherichia coli O157:H7 and genomic comparison with a laboratory strain K-12.</title>
        <authorList>
            <person name="Hayashi T."/>
            <person name="Makino K."/>
            <person name="Ohnishi M."/>
            <person name="Kurokawa K."/>
            <person name="Ishii K."/>
            <person name="Yokoyama K."/>
            <person name="Han C.-G."/>
            <person name="Ohtsubo E."/>
            <person name="Nakayama K."/>
            <person name="Murata T."/>
            <person name="Tanaka M."/>
            <person name="Tobe T."/>
            <person name="Iida T."/>
            <person name="Takami H."/>
            <person name="Honda T."/>
            <person name="Sasakawa C."/>
            <person name="Ogasawara N."/>
            <person name="Yasunaga T."/>
            <person name="Kuhara S."/>
            <person name="Shiba T."/>
            <person name="Hattori M."/>
            <person name="Shinagawa H."/>
        </authorList>
    </citation>
    <scope>NUCLEOTIDE SEQUENCE [LARGE SCALE GENOMIC DNA]</scope>
    <source>
        <strain>O157:H7 / Sakai / RIMD 0509952 / EHEC</strain>
    </source>
</reference>